<name>IF2_AZOSB</name>
<feature type="chain" id="PRO_0000335458" description="Translation initiation factor IF-2">
    <location>
        <begin position="1"/>
        <end position="940"/>
    </location>
</feature>
<feature type="domain" description="tr-type G">
    <location>
        <begin position="440"/>
        <end position="609"/>
    </location>
</feature>
<feature type="region of interest" description="Disordered" evidence="3">
    <location>
        <begin position="138"/>
        <end position="354"/>
    </location>
</feature>
<feature type="region of interest" description="G1" evidence="1">
    <location>
        <begin position="449"/>
        <end position="456"/>
    </location>
</feature>
<feature type="region of interest" description="G2" evidence="1">
    <location>
        <begin position="474"/>
        <end position="478"/>
    </location>
</feature>
<feature type="region of interest" description="G3" evidence="1">
    <location>
        <begin position="495"/>
        <end position="498"/>
    </location>
</feature>
<feature type="region of interest" description="G4" evidence="1">
    <location>
        <begin position="549"/>
        <end position="552"/>
    </location>
</feature>
<feature type="region of interest" description="G5" evidence="1">
    <location>
        <begin position="585"/>
        <end position="587"/>
    </location>
</feature>
<feature type="compositionally biased region" description="Low complexity" evidence="3">
    <location>
        <begin position="138"/>
        <end position="147"/>
    </location>
</feature>
<feature type="compositionally biased region" description="Low complexity" evidence="3">
    <location>
        <begin position="161"/>
        <end position="208"/>
    </location>
</feature>
<feature type="compositionally biased region" description="Basic and acidic residues" evidence="3">
    <location>
        <begin position="214"/>
        <end position="271"/>
    </location>
</feature>
<feature type="compositionally biased region" description="Basic and acidic residues" evidence="3">
    <location>
        <begin position="289"/>
        <end position="311"/>
    </location>
</feature>
<feature type="binding site" evidence="2">
    <location>
        <begin position="449"/>
        <end position="456"/>
    </location>
    <ligand>
        <name>GTP</name>
        <dbReference type="ChEBI" id="CHEBI:37565"/>
    </ligand>
</feature>
<feature type="binding site" evidence="2">
    <location>
        <begin position="495"/>
        <end position="499"/>
    </location>
    <ligand>
        <name>GTP</name>
        <dbReference type="ChEBI" id="CHEBI:37565"/>
    </ligand>
</feature>
<feature type="binding site" evidence="2">
    <location>
        <begin position="549"/>
        <end position="552"/>
    </location>
    <ligand>
        <name>GTP</name>
        <dbReference type="ChEBI" id="CHEBI:37565"/>
    </ligand>
</feature>
<proteinExistence type="inferred from homology"/>
<comment type="function">
    <text evidence="2">One of the essential components for the initiation of protein synthesis. Protects formylmethionyl-tRNA from spontaneous hydrolysis and promotes its binding to the 30S ribosomal subunits. Also involved in the hydrolysis of GTP during the formation of the 70S ribosomal complex.</text>
</comment>
<comment type="subcellular location">
    <subcellularLocation>
        <location evidence="2">Cytoplasm</location>
    </subcellularLocation>
</comment>
<comment type="similarity">
    <text evidence="2">Belongs to the TRAFAC class translation factor GTPase superfamily. Classic translation factor GTPase family. IF-2 subfamily.</text>
</comment>
<accession>A1K7B9</accession>
<keyword id="KW-0963">Cytoplasm</keyword>
<keyword id="KW-0342">GTP-binding</keyword>
<keyword id="KW-0396">Initiation factor</keyword>
<keyword id="KW-0547">Nucleotide-binding</keyword>
<keyword id="KW-0648">Protein biosynthesis</keyword>
<keyword id="KW-1185">Reference proteome</keyword>
<organism>
    <name type="scientific">Azoarcus sp. (strain BH72)</name>
    <dbReference type="NCBI Taxonomy" id="418699"/>
    <lineage>
        <taxon>Bacteria</taxon>
        <taxon>Pseudomonadati</taxon>
        <taxon>Pseudomonadota</taxon>
        <taxon>Betaproteobacteria</taxon>
        <taxon>Rhodocyclales</taxon>
        <taxon>Zoogloeaceae</taxon>
        <taxon>Azoarcus</taxon>
    </lineage>
</organism>
<evidence type="ECO:0000250" key="1"/>
<evidence type="ECO:0000255" key="2">
    <source>
        <dbReference type="HAMAP-Rule" id="MF_00100"/>
    </source>
</evidence>
<evidence type="ECO:0000256" key="3">
    <source>
        <dbReference type="SAM" id="MobiDB-lite"/>
    </source>
</evidence>
<sequence>MEQMSVTQFAGELKMPAAALLEQLKRAGVDKSSAADLLTEQDKSRLLEYLRRAHGGGEPKGKITLTRKQTTEIRATDSTGRARTVQVEVRKKRTFVKRDELLGDAASAESPLLEEELSVAGEAAGEAVAAPEPVLEAAPVEVVAEPEPVQPEPLPEPEPEPVVVEEAPVQQAAEPEPVEAAAVAAEAESPESAQPAAPRARPVSITELLSEEEIAAREREARRHRELVERQQADLRARQQREAAAKAAAEARRLDEEAKARAEQQKKEEAAKPAAKPAPGPTGTLHRPAKADDKAGKDAKRGPAREADGAKRRGIKTRGEVGGAASGNAWRGAKGGGRHGRQQDDRQTFQAPTEPIVREVHVPETITVADLAHKMSVKATEVIKTLMKMGSMVTINQVLDQETAMIVVEELGHKALAAKLDDPDAFLEETDAHKDAELLPRAPVVTVMGHVDHGKTSLLDYIRRAKVAAGEAGGITQHIGAYHVETPRGVITFLDTPGHEAFTAMRARGAKATDIVILVCAADDGVMPQTREAIHHAKAAGVPVVVAITKIDKPEANAERVKQELVSESVIPEEYGGDTMFVPVSAKTGTGVDELLEAVLLQAEVLELTAAVDAPAKGLIVEARLDKGRGPVASLLVQSGTLRKGDVLLVGATFGRIRAMLDENGKPVDEAGPSIPVEILGLSDVPAAGDEAIVLGDEKKAREIALFRQGKFRDVKLAKQQAAKLESMFEQMAEGEVKSLPLIIKADVQGSQEALAQSLAKLSNDEVRVNVIHGAVGAISESDVNLAQASGAVIIGFNTRADAGARKLAESFGVDIRYYNIIYDAVDEVKSALSGMLAPEKREEVIGMVEIRQVFTISKVGSVAGCYVLEGLVKRGSSVRLIRNHTVVWTGELESLKRFKDDVKEVKFGYECGLQLKNYNDIQVGDQLEVFEIKEVARTL</sequence>
<reference key="1">
    <citation type="journal article" date="2006" name="Nat. Biotechnol.">
        <title>Complete genome of the mutualistic, N2-fixing grass endophyte Azoarcus sp. strain BH72.</title>
        <authorList>
            <person name="Krause A."/>
            <person name="Ramakumar A."/>
            <person name="Bartels D."/>
            <person name="Battistoni F."/>
            <person name="Bekel T."/>
            <person name="Boch J."/>
            <person name="Boehm M."/>
            <person name="Friedrich F."/>
            <person name="Hurek T."/>
            <person name="Krause L."/>
            <person name="Linke B."/>
            <person name="McHardy A.C."/>
            <person name="Sarkar A."/>
            <person name="Schneiker S."/>
            <person name="Syed A.A."/>
            <person name="Thauer R."/>
            <person name="Vorhoelter F.-J."/>
            <person name="Weidner S."/>
            <person name="Puehler A."/>
            <person name="Reinhold-Hurek B."/>
            <person name="Kaiser O."/>
            <person name="Goesmann A."/>
        </authorList>
    </citation>
    <scope>NUCLEOTIDE SEQUENCE [LARGE SCALE GENOMIC DNA]</scope>
    <source>
        <strain>BH72</strain>
    </source>
</reference>
<protein>
    <recommendedName>
        <fullName evidence="2">Translation initiation factor IF-2</fullName>
    </recommendedName>
</protein>
<gene>
    <name evidence="2" type="primary">infB</name>
    <name type="ordered locus">azo2107</name>
</gene>
<dbReference type="EMBL" id="AM406670">
    <property type="protein sequence ID" value="CAL94724.1"/>
    <property type="molecule type" value="Genomic_DNA"/>
</dbReference>
<dbReference type="RefSeq" id="WP_011765838.1">
    <property type="nucleotide sequence ID" value="NC_008702.1"/>
</dbReference>
<dbReference type="SMR" id="A1K7B9"/>
<dbReference type="STRING" id="62928.azo2107"/>
<dbReference type="KEGG" id="aoa:dqs_2239"/>
<dbReference type="KEGG" id="azo:azo2107"/>
<dbReference type="eggNOG" id="COG0532">
    <property type="taxonomic scope" value="Bacteria"/>
</dbReference>
<dbReference type="HOGENOM" id="CLU_006301_6_0_4"/>
<dbReference type="OrthoDB" id="9811804at2"/>
<dbReference type="Proteomes" id="UP000002588">
    <property type="component" value="Chromosome"/>
</dbReference>
<dbReference type="GO" id="GO:0005829">
    <property type="term" value="C:cytosol"/>
    <property type="evidence" value="ECO:0007669"/>
    <property type="project" value="TreeGrafter"/>
</dbReference>
<dbReference type="GO" id="GO:0005525">
    <property type="term" value="F:GTP binding"/>
    <property type="evidence" value="ECO:0007669"/>
    <property type="project" value="UniProtKB-KW"/>
</dbReference>
<dbReference type="GO" id="GO:0003924">
    <property type="term" value="F:GTPase activity"/>
    <property type="evidence" value="ECO:0007669"/>
    <property type="project" value="UniProtKB-UniRule"/>
</dbReference>
<dbReference type="GO" id="GO:0097216">
    <property type="term" value="F:guanosine tetraphosphate binding"/>
    <property type="evidence" value="ECO:0007669"/>
    <property type="project" value="UniProtKB-ARBA"/>
</dbReference>
<dbReference type="GO" id="GO:0003743">
    <property type="term" value="F:translation initiation factor activity"/>
    <property type="evidence" value="ECO:0007669"/>
    <property type="project" value="UniProtKB-UniRule"/>
</dbReference>
<dbReference type="CDD" id="cd01887">
    <property type="entry name" value="IF2_eIF5B"/>
    <property type="match status" value="1"/>
</dbReference>
<dbReference type="CDD" id="cd03702">
    <property type="entry name" value="IF2_mtIF2_II"/>
    <property type="match status" value="1"/>
</dbReference>
<dbReference type="CDD" id="cd03692">
    <property type="entry name" value="mtIF2_IVc"/>
    <property type="match status" value="1"/>
</dbReference>
<dbReference type="FunFam" id="2.40.30.10:FF:000007">
    <property type="entry name" value="Translation initiation factor IF-2"/>
    <property type="match status" value="1"/>
</dbReference>
<dbReference type="FunFam" id="2.40.30.10:FF:000008">
    <property type="entry name" value="Translation initiation factor IF-2"/>
    <property type="match status" value="1"/>
</dbReference>
<dbReference type="FunFam" id="3.40.50.10050:FF:000001">
    <property type="entry name" value="Translation initiation factor IF-2"/>
    <property type="match status" value="1"/>
</dbReference>
<dbReference type="FunFam" id="3.40.50.300:FF:000019">
    <property type="entry name" value="Translation initiation factor IF-2"/>
    <property type="match status" value="1"/>
</dbReference>
<dbReference type="Gene3D" id="3.40.50.300">
    <property type="entry name" value="P-loop containing nucleotide triphosphate hydrolases"/>
    <property type="match status" value="1"/>
</dbReference>
<dbReference type="Gene3D" id="3.30.56.50">
    <property type="entry name" value="Putative DNA-binding domain, N-terminal subdomain of bacterial translation initiation factor IF2"/>
    <property type="match status" value="1"/>
</dbReference>
<dbReference type="Gene3D" id="2.40.30.10">
    <property type="entry name" value="Translation factors"/>
    <property type="match status" value="2"/>
</dbReference>
<dbReference type="Gene3D" id="3.40.50.10050">
    <property type="entry name" value="Translation initiation factor IF- 2, domain 3"/>
    <property type="match status" value="1"/>
</dbReference>
<dbReference type="HAMAP" id="MF_00100_B">
    <property type="entry name" value="IF_2_B"/>
    <property type="match status" value="1"/>
</dbReference>
<dbReference type="InterPro" id="IPR009061">
    <property type="entry name" value="DNA-bd_dom_put_sf"/>
</dbReference>
<dbReference type="InterPro" id="IPR053905">
    <property type="entry name" value="EF-G-like_DII"/>
</dbReference>
<dbReference type="InterPro" id="IPR004161">
    <property type="entry name" value="EFTu-like_2"/>
</dbReference>
<dbReference type="InterPro" id="IPR013575">
    <property type="entry name" value="IF2_assoc_dom_bac"/>
</dbReference>
<dbReference type="InterPro" id="IPR044145">
    <property type="entry name" value="IF2_II"/>
</dbReference>
<dbReference type="InterPro" id="IPR006847">
    <property type="entry name" value="IF2_N"/>
</dbReference>
<dbReference type="InterPro" id="IPR027417">
    <property type="entry name" value="P-loop_NTPase"/>
</dbReference>
<dbReference type="InterPro" id="IPR005225">
    <property type="entry name" value="Small_GTP-bd"/>
</dbReference>
<dbReference type="InterPro" id="IPR000795">
    <property type="entry name" value="T_Tr_GTP-bd_dom"/>
</dbReference>
<dbReference type="InterPro" id="IPR000178">
    <property type="entry name" value="TF_IF2_bacterial-like"/>
</dbReference>
<dbReference type="InterPro" id="IPR015760">
    <property type="entry name" value="TIF_IF2"/>
</dbReference>
<dbReference type="InterPro" id="IPR023115">
    <property type="entry name" value="TIF_IF2_dom3"/>
</dbReference>
<dbReference type="InterPro" id="IPR036925">
    <property type="entry name" value="TIF_IF2_dom3_sf"/>
</dbReference>
<dbReference type="InterPro" id="IPR009000">
    <property type="entry name" value="Transl_B-barrel_sf"/>
</dbReference>
<dbReference type="NCBIfam" id="TIGR00487">
    <property type="entry name" value="IF-2"/>
    <property type="match status" value="1"/>
</dbReference>
<dbReference type="NCBIfam" id="TIGR00231">
    <property type="entry name" value="small_GTP"/>
    <property type="match status" value="1"/>
</dbReference>
<dbReference type="PANTHER" id="PTHR43381:SF5">
    <property type="entry name" value="TR-TYPE G DOMAIN-CONTAINING PROTEIN"/>
    <property type="match status" value="1"/>
</dbReference>
<dbReference type="PANTHER" id="PTHR43381">
    <property type="entry name" value="TRANSLATION INITIATION FACTOR IF-2-RELATED"/>
    <property type="match status" value="1"/>
</dbReference>
<dbReference type="Pfam" id="PF22042">
    <property type="entry name" value="EF-G_D2"/>
    <property type="match status" value="1"/>
</dbReference>
<dbReference type="Pfam" id="PF00009">
    <property type="entry name" value="GTP_EFTU"/>
    <property type="match status" value="1"/>
</dbReference>
<dbReference type="Pfam" id="PF03144">
    <property type="entry name" value="GTP_EFTU_D2"/>
    <property type="match status" value="1"/>
</dbReference>
<dbReference type="Pfam" id="PF11987">
    <property type="entry name" value="IF-2"/>
    <property type="match status" value="1"/>
</dbReference>
<dbReference type="Pfam" id="PF08364">
    <property type="entry name" value="IF2_assoc"/>
    <property type="match status" value="1"/>
</dbReference>
<dbReference type="Pfam" id="PF04760">
    <property type="entry name" value="IF2_N"/>
    <property type="match status" value="2"/>
</dbReference>
<dbReference type="SUPFAM" id="SSF52156">
    <property type="entry name" value="Initiation factor IF2/eIF5b, domain 3"/>
    <property type="match status" value="1"/>
</dbReference>
<dbReference type="SUPFAM" id="SSF52540">
    <property type="entry name" value="P-loop containing nucleoside triphosphate hydrolases"/>
    <property type="match status" value="1"/>
</dbReference>
<dbReference type="SUPFAM" id="SSF46955">
    <property type="entry name" value="Putative DNA-binding domain"/>
    <property type="match status" value="1"/>
</dbReference>
<dbReference type="SUPFAM" id="SSF50447">
    <property type="entry name" value="Translation proteins"/>
    <property type="match status" value="2"/>
</dbReference>
<dbReference type="PROSITE" id="PS51722">
    <property type="entry name" value="G_TR_2"/>
    <property type="match status" value="1"/>
</dbReference>
<dbReference type="PROSITE" id="PS01176">
    <property type="entry name" value="IF2"/>
    <property type="match status" value="1"/>
</dbReference>